<evidence type="ECO:0000250" key="1"/>
<evidence type="ECO:0000305" key="2"/>
<sequence>MLIIPAIDLKDGACVRLRQGLMEDATVFSDDPVAMAAKWVDGGCRRLHLVDLNGAFEGKPVNGEVVTAIARRYPDLPIQIGGGIRSLETIEHYVRAGVSYVIIGTKAVKQPEFVGEACRAFPGKVIVGLDAKDGFVATDGWAEVSEVQVIDLARRFEADGVSAIVYTDISKDGMMQGCNVEATAALANATRIPVIASGGIHNLGDIQKLLDARTPGIIGAITGRAIYEGTLDVAEAQALCDNFKA</sequence>
<feature type="chain" id="PRO_0000142038" description="1-(5-phosphoribosyl)-5-[(5-phosphoribosylamino)methylideneamino] imidazole-4-carboxamide isomerase">
    <location>
        <begin position="1"/>
        <end position="245"/>
    </location>
</feature>
<feature type="active site" description="Proton acceptor" evidence="1">
    <location>
        <position position="8"/>
    </location>
</feature>
<feature type="active site" description="Proton donor" evidence="1">
    <location>
        <position position="130"/>
    </location>
</feature>
<accession>Q9HU43</accession>
<comment type="catalytic activity">
    <reaction>
        <text>1-(5-phospho-beta-D-ribosyl)-5-[(5-phospho-beta-D-ribosylamino)methylideneamino]imidazole-4-carboxamide = 5-[(5-phospho-1-deoxy-D-ribulos-1-ylimino)methylamino]-1-(5-phospho-beta-D-ribosyl)imidazole-4-carboxamide</text>
        <dbReference type="Rhea" id="RHEA:15469"/>
        <dbReference type="ChEBI" id="CHEBI:58435"/>
        <dbReference type="ChEBI" id="CHEBI:58525"/>
        <dbReference type="EC" id="5.3.1.16"/>
    </reaction>
</comment>
<comment type="pathway">
    <text>Amino-acid biosynthesis; L-histidine biosynthesis; L-histidine from 5-phospho-alpha-D-ribose 1-diphosphate: step 4/9.</text>
</comment>
<comment type="subcellular location">
    <subcellularLocation>
        <location evidence="1">Cytoplasm</location>
    </subcellularLocation>
</comment>
<comment type="similarity">
    <text evidence="2">Belongs to the HisA/HisF family.</text>
</comment>
<organism>
    <name type="scientific">Pseudomonas aeruginosa (strain ATCC 15692 / DSM 22644 / CIP 104116 / JCM 14847 / LMG 12228 / 1C / PRS 101 / PAO1)</name>
    <dbReference type="NCBI Taxonomy" id="208964"/>
    <lineage>
        <taxon>Bacteria</taxon>
        <taxon>Pseudomonadati</taxon>
        <taxon>Pseudomonadota</taxon>
        <taxon>Gammaproteobacteria</taxon>
        <taxon>Pseudomonadales</taxon>
        <taxon>Pseudomonadaceae</taxon>
        <taxon>Pseudomonas</taxon>
    </lineage>
</organism>
<gene>
    <name type="primary">hisA</name>
    <name type="ordered locus">PA5141</name>
</gene>
<reference key="1">
    <citation type="journal article" date="2000" name="Nature">
        <title>Complete genome sequence of Pseudomonas aeruginosa PAO1, an opportunistic pathogen.</title>
        <authorList>
            <person name="Stover C.K."/>
            <person name="Pham X.-Q.T."/>
            <person name="Erwin A.L."/>
            <person name="Mizoguchi S.D."/>
            <person name="Warrener P."/>
            <person name="Hickey M.J."/>
            <person name="Brinkman F.S.L."/>
            <person name="Hufnagle W.O."/>
            <person name="Kowalik D.J."/>
            <person name="Lagrou M."/>
            <person name="Garber R.L."/>
            <person name="Goltry L."/>
            <person name="Tolentino E."/>
            <person name="Westbrock-Wadman S."/>
            <person name="Yuan Y."/>
            <person name="Brody L.L."/>
            <person name="Coulter S.N."/>
            <person name="Folger K.R."/>
            <person name="Kas A."/>
            <person name="Larbig K."/>
            <person name="Lim R.M."/>
            <person name="Smith K.A."/>
            <person name="Spencer D.H."/>
            <person name="Wong G.K.-S."/>
            <person name="Wu Z."/>
            <person name="Paulsen I.T."/>
            <person name="Reizer J."/>
            <person name="Saier M.H. Jr."/>
            <person name="Hancock R.E.W."/>
            <person name="Lory S."/>
            <person name="Olson M.V."/>
        </authorList>
    </citation>
    <scope>NUCLEOTIDE SEQUENCE [LARGE SCALE GENOMIC DNA]</scope>
    <source>
        <strain>ATCC 15692 / DSM 22644 / CIP 104116 / JCM 14847 / LMG 12228 / 1C / PRS 101 / PAO1</strain>
    </source>
</reference>
<dbReference type="EC" id="5.3.1.16"/>
<dbReference type="EMBL" id="AE004091">
    <property type="protein sequence ID" value="AAG08526.1"/>
    <property type="molecule type" value="Genomic_DNA"/>
</dbReference>
<dbReference type="PIR" id="A83003">
    <property type="entry name" value="A83003"/>
</dbReference>
<dbReference type="RefSeq" id="NP_253828.1">
    <property type="nucleotide sequence ID" value="NC_002516.2"/>
</dbReference>
<dbReference type="RefSeq" id="WP_003106336.1">
    <property type="nucleotide sequence ID" value="NZ_QZGE01000002.1"/>
</dbReference>
<dbReference type="SMR" id="Q9HU43"/>
<dbReference type="FunCoup" id="Q9HU43">
    <property type="interactions" value="554"/>
</dbReference>
<dbReference type="STRING" id="208964.PA5141"/>
<dbReference type="PaxDb" id="208964-PA5141"/>
<dbReference type="DNASU" id="878542"/>
<dbReference type="GeneID" id="878542"/>
<dbReference type="KEGG" id="pae:PA5141"/>
<dbReference type="PATRIC" id="fig|208964.12.peg.5387"/>
<dbReference type="PseudoCAP" id="PA5141"/>
<dbReference type="HOGENOM" id="CLU_048577_1_1_6"/>
<dbReference type="InParanoid" id="Q9HU43"/>
<dbReference type="OrthoDB" id="9807749at2"/>
<dbReference type="PhylomeDB" id="Q9HU43"/>
<dbReference type="BioCyc" id="PAER208964:G1FZ6-5256-MONOMER"/>
<dbReference type="UniPathway" id="UPA00031">
    <property type="reaction ID" value="UER00009"/>
</dbReference>
<dbReference type="Proteomes" id="UP000002438">
    <property type="component" value="Chromosome"/>
</dbReference>
<dbReference type="GO" id="GO:0005737">
    <property type="term" value="C:cytoplasm"/>
    <property type="evidence" value="ECO:0000318"/>
    <property type="project" value="GO_Central"/>
</dbReference>
<dbReference type="GO" id="GO:0003949">
    <property type="term" value="F:1-(5-phosphoribosyl)-5-[(5-phosphoribosylamino)methylideneamino]imidazole-4-carboxamide isomerase activity"/>
    <property type="evidence" value="ECO:0000318"/>
    <property type="project" value="GO_Central"/>
</dbReference>
<dbReference type="GO" id="GO:0000105">
    <property type="term" value="P:L-histidine biosynthetic process"/>
    <property type="evidence" value="ECO:0000318"/>
    <property type="project" value="GO_Central"/>
</dbReference>
<dbReference type="CDD" id="cd04732">
    <property type="entry name" value="HisA"/>
    <property type="match status" value="1"/>
</dbReference>
<dbReference type="FunFam" id="3.20.20.70:FF:000009">
    <property type="entry name" value="1-(5-phosphoribosyl)-5-[(5-phosphoribosylamino)methylideneamino] imidazole-4-carboxamide isomerase"/>
    <property type="match status" value="1"/>
</dbReference>
<dbReference type="Gene3D" id="3.20.20.70">
    <property type="entry name" value="Aldolase class I"/>
    <property type="match status" value="1"/>
</dbReference>
<dbReference type="HAMAP" id="MF_01014">
    <property type="entry name" value="HisA"/>
    <property type="match status" value="1"/>
</dbReference>
<dbReference type="InterPro" id="IPR013785">
    <property type="entry name" value="Aldolase_TIM"/>
</dbReference>
<dbReference type="InterPro" id="IPR006062">
    <property type="entry name" value="His_biosynth"/>
</dbReference>
<dbReference type="InterPro" id="IPR006063">
    <property type="entry name" value="HisA_bact_arch"/>
</dbReference>
<dbReference type="InterPro" id="IPR044524">
    <property type="entry name" value="Isoase_HisA-like"/>
</dbReference>
<dbReference type="InterPro" id="IPR023016">
    <property type="entry name" value="Isoase_HisA-like_bact"/>
</dbReference>
<dbReference type="InterPro" id="IPR011060">
    <property type="entry name" value="RibuloseP-bd_barrel"/>
</dbReference>
<dbReference type="NCBIfam" id="TIGR00007">
    <property type="entry name" value="1-(5-phosphoribosyl)-5-[(5-phosphoribosylamino)methylideneamino]imidazole-4-carboxamide isomerase"/>
    <property type="match status" value="1"/>
</dbReference>
<dbReference type="PANTHER" id="PTHR43090">
    <property type="entry name" value="1-(5-PHOSPHORIBOSYL)-5-[(5-PHOSPHORIBOSYLAMINO)METHYLIDENEAMINO] IMIDAZOLE-4-CARBOXAMIDE ISOMERASE"/>
    <property type="match status" value="1"/>
</dbReference>
<dbReference type="PANTHER" id="PTHR43090:SF2">
    <property type="entry name" value="1-(5-PHOSPHORIBOSYL)-5-[(5-PHOSPHORIBOSYLAMINO)METHYLIDENEAMINO] IMIDAZOLE-4-CARBOXAMIDE ISOMERASE"/>
    <property type="match status" value="1"/>
</dbReference>
<dbReference type="Pfam" id="PF00977">
    <property type="entry name" value="His_biosynth"/>
    <property type="match status" value="1"/>
</dbReference>
<dbReference type="SUPFAM" id="SSF51366">
    <property type="entry name" value="Ribulose-phoshate binding barrel"/>
    <property type="match status" value="1"/>
</dbReference>
<keyword id="KW-0028">Amino-acid biosynthesis</keyword>
<keyword id="KW-0963">Cytoplasm</keyword>
<keyword id="KW-0368">Histidine biosynthesis</keyword>
<keyword id="KW-0413">Isomerase</keyword>
<keyword id="KW-1185">Reference proteome</keyword>
<protein>
    <recommendedName>
        <fullName>1-(5-phosphoribosyl)-5-[(5-phosphoribosylamino)methylideneamino] imidazole-4-carboxamide isomerase</fullName>
        <ecNumber>5.3.1.16</ecNumber>
    </recommendedName>
    <alternativeName>
        <fullName>Phosphoribosylformimino-5-aminoimidazole carboxamide ribotide isomerase</fullName>
    </alternativeName>
</protein>
<proteinExistence type="inferred from homology"/>
<name>HIS4_PSEAE</name>